<evidence type="ECO:0000255" key="1">
    <source>
        <dbReference type="HAMAP-Rule" id="MF_00199"/>
    </source>
</evidence>
<proteinExistence type="inferred from homology"/>
<accession>B1JKY5</accession>
<keyword id="KW-0378">Hydrolase</keyword>
<reference key="1">
    <citation type="submission" date="2008-02" db="EMBL/GenBank/DDBJ databases">
        <title>Complete sequence of Yersinia pseudotuberculosis YPIII.</title>
        <authorList>
            <consortium name="US DOE Joint Genome Institute"/>
            <person name="Copeland A."/>
            <person name="Lucas S."/>
            <person name="Lapidus A."/>
            <person name="Glavina del Rio T."/>
            <person name="Dalin E."/>
            <person name="Tice H."/>
            <person name="Bruce D."/>
            <person name="Goodwin L."/>
            <person name="Pitluck S."/>
            <person name="Munk A.C."/>
            <person name="Brettin T."/>
            <person name="Detter J.C."/>
            <person name="Han C."/>
            <person name="Tapia R."/>
            <person name="Schmutz J."/>
            <person name="Larimer F."/>
            <person name="Land M."/>
            <person name="Hauser L."/>
            <person name="Challacombe J.F."/>
            <person name="Green L."/>
            <person name="Lindler L.E."/>
            <person name="Nikolich M.P."/>
            <person name="Richardson P."/>
        </authorList>
    </citation>
    <scope>NUCLEOTIDE SEQUENCE [LARGE SCALE GENOMIC DNA]</scope>
    <source>
        <strain>YPIII</strain>
    </source>
</reference>
<sequence>MSTYLIGDIHGCLDELLALLAQVNFDPQQDTLWLTGDLVARGPASLDVLRYVRSLGPAVRMVLGNHDLHLLAVYAGISRNKPKDRITPLLDAPDADELINWLRRQPVLQVDDQLKLIMAHAGITPQWDIETAQMCAREVEAVLSSDSYPLFLDAMYGDMPNNWSPELTGLARLRFSTNALTRMRFCFPNGQLDMICKDTPENAPAPLKPWFDLPRLVDPEYSIIFGHWASLEGKGVPEGIYGLDTGCCWGGDLTLLRWEDKRYFTQRAFKAEAEINNNNGFAAGEEVQH</sequence>
<name>APAH_YERPY</name>
<organism>
    <name type="scientific">Yersinia pseudotuberculosis serotype O:3 (strain YPIII)</name>
    <dbReference type="NCBI Taxonomy" id="502800"/>
    <lineage>
        <taxon>Bacteria</taxon>
        <taxon>Pseudomonadati</taxon>
        <taxon>Pseudomonadota</taxon>
        <taxon>Gammaproteobacteria</taxon>
        <taxon>Enterobacterales</taxon>
        <taxon>Yersiniaceae</taxon>
        <taxon>Yersinia</taxon>
    </lineage>
</organism>
<gene>
    <name evidence="1" type="primary">apaH</name>
    <name type="ordered locus">YPK_3575</name>
</gene>
<comment type="function">
    <text evidence="1">Hydrolyzes diadenosine 5',5'''-P1,P4-tetraphosphate to yield ADP.</text>
</comment>
<comment type="catalytic activity">
    <reaction evidence="1">
        <text>P(1),P(4)-bis(5'-adenosyl) tetraphosphate + H2O = 2 ADP + 2 H(+)</text>
        <dbReference type="Rhea" id="RHEA:24252"/>
        <dbReference type="ChEBI" id="CHEBI:15377"/>
        <dbReference type="ChEBI" id="CHEBI:15378"/>
        <dbReference type="ChEBI" id="CHEBI:58141"/>
        <dbReference type="ChEBI" id="CHEBI:456216"/>
        <dbReference type="EC" id="3.6.1.41"/>
    </reaction>
</comment>
<comment type="similarity">
    <text evidence="1">Belongs to the Ap4A hydrolase family.</text>
</comment>
<feature type="chain" id="PRO_1000099344" description="Bis(5'-nucleosyl)-tetraphosphatase, symmetrical">
    <location>
        <begin position="1"/>
        <end position="289"/>
    </location>
</feature>
<dbReference type="EC" id="3.6.1.41" evidence="1"/>
<dbReference type="EMBL" id="CP000950">
    <property type="protein sequence ID" value="ACA69842.1"/>
    <property type="molecule type" value="Genomic_DNA"/>
</dbReference>
<dbReference type="RefSeq" id="WP_012304598.1">
    <property type="nucleotide sequence ID" value="NZ_CP009792.1"/>
</dbReference>
<dbReference type="SMR" id="B1JKY5"/>
<dbReference type="KEGG" id="ypy:YPK_3575"/>
<dbReference type="PATRIC" id="fig|502800.11.peg.4321"/>
<dbReference type="GO" id="GO:0008803">
    <property type="term" value="F:bis(5'-nucleosyl)-tetraphosphatase (symmetrical) activity"/>
    <property type="evidence" value="ECO:0007669"/>
    <property type="project" value="UniProtKB-UniRule"/>
</dbReference>
<dbReference type="CDD" id="cd07422">
    <property type="entry name" value="MPP_ApaH"/>
    <property type="match status" value="1"/>
</dbReference>
<dbReference type="FunFam" id="3.60.21.10:FF:000013">
    <property type="entry name" value="Bis(5'-nucleosyl)-tetraphosphatase, symmetrical"/>
    <property type="match status" value="1"/>
</dbReference>
<dbReference type="Gene3D" id="3.60.21.10">
    <property type="match status" value="1"/>
</dbReference>
<dbReference type="HAMAP" id="MF_00199">
    <property type="entry name" value="ApaH"/>
    <property type="match status" value="1"/>
</dbReference>
<dbReference type="InterPro" id="IPR004617">
    <property type="entry name" value="ApaH"/>
</dbReference>
<dbReference type="InterPro" id="IPR004843">
    <property type="entry name" value="Calcineurin-like_PHP_ApaH"/>
</dbReference>
<dbReference type="InterPro" id="IPR029052">
    <property type="entry name" value="Metallo-depent_PP-like"/>
</dbReference>
<dbReference type="NCBIfam" id="TIGR00668">
    <property type="entry name" value="apaH"/>
    <property type="match status" value="1"/>
</dbReference>
<dbReference type="NCBIfam" id="NF001204">
    <property type="entry name" value="PRK00166.1"/>
    <property type="match status" value="1"/>
</dbReference>
<dbReference type="PANTHER" id="PTHR40942">
    <property type="match status" value="1"/>
</dbReference>
<dbReference type="PANTHER" id="PTHR40942:SF4">
    <property type="entry name" value="CYTOCHROME C5"/>
    <property type="match status" value="1"/>
</dbReference>
<dbReference type="Pfam" id="PF00149">
    <property type="entry name" value="Metallophos"/>
    <property type="match status" value="1"/>
</dbReference>
<dbReference type="PIRSF" id="PIRSF000903">
    <property type="entry name" value="B5n-ttraPtase_sm"/>
    <property type="match status" value="1"/>
</dbReference>
<dbReference type="SUPFAM" id="SSF56300">
    <property type="entry name" value="Metallo-dependent phosphatases"/>
    <property type="match status" value="1"/>
</dbReference>
<protein>
    <recommendedName>
        <fullName evidence="1">Bis(5'-nucleosyl)-tetraphosphatase, symmetrical</fullName>
        <ecNumber evidence="1">3.6.1.41</ecNumber>
    </recommendedName>
    <alternativeName>
        <fullName evidence="1">Ap4A hydrolase</fullName>
    </alternativeName>
    <alternativeName>
        <fullName evidence="1">Diadenosine 5',5'''-P1,P4-tetraphosphate pyrophosphohydrolase</fullName>
    </alternativeName>
    <alternativeName>
        <fullName evidence="1">Diadenosine tetraphosphatase</fullName>
    </alternativeName>
</protein>